<comment type="function">
    <text evidence="1">Catalyzes the conversion of acetate into acetyl-CoA (AcCoA), an essential intermediate at the junction of anabolic and catabolic pathways. AcsA undergoes a two-step reaction. In the first half reaction, AcsA combines acetate with ATP to form acetyl-adenylate (AcAMP) intermediate. In the second half reaction, it can then transfer the acetyl group from AcAMP to the sulfhydryl group of CoA, forming the product AcCoA.</text>
</comment>
<comment type="catalytic activity">
    <reaction evidence="1">
        <text>acetate + ATP + CoA = acetyl-CoA + AMP + diphosphate</text>
        <dbReference type="Rhea" id="RHEA:23176"/>
        <dbReference type="ChEBI" id="CHEBI:30089"/>
        <dbReference type="ChEBI" id="CHEBI:30616"/>
        <dbReference type="ChEBI" id="CHEBI:33019"/>
        <dbReference type="ChEBI" id="CHEBI:57287"/>
        <dbReference type="ChEBI" id="CHEBI:57288"/>
        <dbReference type="ChEBI" id="CHEBI:456215"/>
        <dbReference type="EC" id="6.2.1.1"/>
    </reaction>
</comment>
<comment type="cofactor">
    <cofactor evidence="1">
        <name>Mg(2+)</name>
        <dbReference type="ChEBI" id="CHEBI:18420"/>
    </cofactor>
</comment>
<comment type="PTM">
    <text evidence="1">Acetylated. Deacetylation by the SIR2-homolog deacetylase activates the enzyme.</text>
</comment>
<comment type="similarity">
    <text evidence="1">Belongs to the ATP-dependent AMP-binding enzyme family.</text>
</comment>
<organism>
    <name type="scientific">Rhodopirellula baltica (strain DSM 10527 / NCIMB 13988 / SH1)</name>
    <dbReference type="NCBI Taxonomy" id="243090"/>
    <lineage>
        <taxon>Bacteria</taxon>
        <taxon>Pseudomonadati</taxon>
        <taxon>Planctomycetota</taxon>
        <taxon>Planctomycetia</taxon>
        <taxon>Pirellulales</taxon>
        <taxon>Pirellulaceae</taxon>
        <taxon>Rhodopirellula</taxon>
    </lineage>
</organism>
<dbReference type="EC" id="6.2.1.1" evidence="1"/>
<dbReference type="EMBL" id="BX294156">
    <property type="protein sequence ID" value="CAD78032.1"/>
    <property type="molecule type" value="Genomic_DNA"/>
</dbReference>
<dbReference type="RefSeq" id="NP_870954.1">
    <property type="nucleotide sequence ID" value="NC_005027.1"/>
</dbReference>
<dbReference type="RefSeq" id="WP_011124127.1">
    <property type="nucleotide sequence ID" value="NC_005027.1"/>
</dbReference>
<dbReference type="SMR" id="P59872"/>
<dbReference type="FunCoup" id="P59872">
    <property type="interactions" value="498"/>
</dbReference>
<dbReference type="STRING" id="243090.RB13264"/>
<dbReference type="EnsemblBacteria" id="CAD78032">
    <property type="protein sequence ID" value="CAD78032"/>
    <property type="gene ID" value="RB13264"/>
</dbReference>
<dbReference type="KEGG" id="rba:RB13264"/>
<dbReference type="PATRIC" id="fig|243090.15.peg.6426"/>
<dbReference type="eggNOG" id="COG0365">
    <property type="taxonomic scope" value="Bacteria"/>
</dbReference>
<dbReference type="HOGENOM" id="CLU_000022_3_6_0"/>
<dbReference type="InParanoid" id="P59872"/>
<dbReference type="OrthoDB" id="9778383at2"/>
<dbReference type="Proteomes" id="UP000001025">
    <property type="component" value="Chromosome"/>
</dbReference>
<dbReference type="GO" id="GO:0005829">
    <property type="term" value="C:cytosol"/>
    <property type="evidence" value="ECO:0000318"/>
    <property type="project" value="GO_Central"/>
</dbReference>
<dbReference type="GO" id="GO:0003987">
    <property type="term" value="F:acetate-CoA ligase activity"/>
    <property type="evidence" value="ECO:0000318"/>
    <property type="project" value="GO_Central"/>
</dbReference>
<dbReference type="GO" id="GO:0016208">
    <property type="term" value="F:AMP binding"/>
    <property type="evidence" value="ECO:0007669"/>
    <property type="project" value="InterPro"/>
</dbReference>
<dbReference type="GO" id="GO:0005524">
    <property type="term" value="F:ATP binding"/>
    <property type="evidence" value="ECO:0007669"/>
    <property type="project" value="UniProtKB-KW"/>
</dbReference>
<dbReference type="GO" id="GO:0046872">
    <property type="term" value="F:metal ion binding"/>
    <property type="evidence" value="ECO:0007669"/>
    <property type="project" value="UniProtKB-KW"/>
</dbReference>
<dbReference type="GO" id="GO:0006085">
    <property type="term" value="P:acetyl-CoA biosynthetic process"/>
    <property type="evidence" value="ECO:0000318"/>
    <property type="project" value="GO_Central"/>
</dbReference>
<dbReference type="GO" id="GO:0019427">
    <property type="term" value="P:acetyl-CoA biosynthetic process from acetate"/>
    <property type="evidence" value="ECO:0007669"/>
    <property type="project" value="InterPro"/>
</dbReference>
<dbReference type="CDD" id="cd05966">
    <property type="entry name" value="ACS"/>
    <property type="match status" value="1"/>
</dbReference>
<dbReference type="FunFam" id="3.40.50.12780:FF:000001">
    <property type="entry name" value="Acetyl-coenzyme A synthetase"/>
    <property type="match status" value="1"/>
</dbReference>
<dbReference type="Gene3D" id="3.30.300.30">
    <property type="match status" value="1"/>
</dbReference>
<dbReference type="Gene3D" id="3.40.50.12780">
    <property type="entry name" value="N-terminal domain of ligase-like"/>
    <property type="match status" value="1"/>
</dbReference>
<dbReference type="HAMAP" id="MF_01123">
    <property type="entry name" value="Ac_CoA_synth"/>
    <property type="match status" value="1"/>
</dbReference>
<dbReference type="InterPro" id="IPR011904">
    <property type="entry name" value="Ac_CoA_lig"/>
</dbReference>
<dbReference type="InterPro" id="IPR032387">
    <property type="entry name" value="ACAS_N"/>
</dbReference>
<dbReference type="InterPro" id="IPR025110">
    <property type="entry name" value="AMP-bd_C"/>
</dbReference>
<dbReference type="InterPro" id="IPR045851">
    <property type="entry name" value="AMP-bd_C_sf"/>
</dbReference>
<dbReference type="InterPro" id="IPR020845">
    <property type="entry name" value="AMP-binding_CS"/>
</dbReference>
<dbReference type="InterPro" id="IPR000873">
    <property type="entry name" value="AMP-dep_synth/lig_dom"/>
</dbReference>
<dbReference type="InterPro" id="IPR042099">
    <property type="entry name" value="ANL_N_sf"/>
</dbReference>
<dbReference type="NCBIfam" id="TIGR02188">
    <property type="entry name" value="Ac_CoA_lig_AcsA"/>
    <property type="match status" value="1"/>
</dbReference>
<dbReference type="NCBIfam" id="NF001208">
    <property type="entry name" value="PRK00174.1"/>
    <property type="match status" value="1"/>
</dbReference>
<dbReference type="PANTHER" id="PTHR24095">
    <property type="entry name" value="ACETYL-COENZYME A SYNTHETASE"/>
    <property type="match status" value="1"/>
</dbReference>
<dbReference type="PANTHER" id="PTHR24095:SF14">
    <property type="entry name" value="ACETYL-COENZYME A SYNTHETASE 1"/>
    <property type="match status" value="1"/>
</dbReference>
<dbReference type="Pfam" id="PF16177">
    <property type="entry name" value="ACAS_N"/>
    <property type="match status" value="1"/>
</dbReference>
<dbReference type="Pfam" id="PF00501">
    <property type="entry name" value="AMP-binding"/>
    <property type="match status" value="1"/>
</dbReference>
<dbReference type="Pfam" id="PF13193">
    <property type="entry name" value="AMP-binding_C"/>
    <property type="match status" value="1"/>
</dbReference>
<dbReference type="SUPFAM" id="SSF56801">
    <property type="entry name" value="Acetyl-CoA synthetase-like"/>
    <property type="match status" value="1"/>
</dbReference>
<dbReference type="PROSITE" id="PS00455">
    <property type="entry name" value="AMP_BINDING"/>
    <property type="match status" value="1"/>
</dbReference>
<reference key="1">
    <citation type="journal article" date="2003" name="Proc. Natl. Acad. Sci. U.S.A.">
        <title>Complete genome sequence of the marine planctomycete Pirellula sp. strain 1.</title>
        <authorList>
            <person name="Gloeckner F.O."/>
            <person name="Kube M."/>
            <person name="Bauer M."/>
            <person name="Teeling H."/>
            <person name="Lombardot T."/>
            <person name="Ludwig W."/>
            <person name="Gade D."/>
            <person name="Beck A."/>
            <person name="Borzym K."/>
            <person name="Heitmann K."/>
            <person name="Rabus R."/>
            <person name="Schlesner H."/>
            <person name="Amann R."/>
            <person name="Reinhardt R."/>
        </authorList>
    </citation>
    <scope>NUCLEOTIDE SEQUENCE [LARGE SCALE GENOMIC DNA]</scope>
    <source>
        <strain>DSM 10527 / NCIMB 13988 / SH1</strain>
    </source>
</reference>
<sequence length="671" mass="74143">MPTASASESSSNQPESSNASGSIDHVLVEDRLFHPSAEFTSKAVISTEEQYEKLATAARENPDEFWRAEALEHLHWFEPFGTVCDWQPPHAKWFVNGKTNACYNSVDAHVAAGRGDRTAIIWEGEPVEDGQPRDQRTLTYAELQTEVAKCAEGLTQLGIGVGDVVSIYMPMTPELAVAMLACARIGAIHSVIFAGFSAESIAERNNDASAKLVITSDGLYRRGKVLPLKATVDEALEKSPTVEKCLVLRRTGDDAPMQEGRDVWWHDVVENQPGEMAAKPLDSETPLFILYTSGSTGKPKGILHTTAGYNLWAKRTFEWVFDHREGDVYWCTADCGWITGHSYVVYGPLSAGATCLMYEGAPNFPAEDRFWDIVERHKVSILYTAPTAVRAFIKWGDEHVDKHDLSSLRLLGSVGEGINPEAWMWYHKKIGGEKCPIVDTWWQTETGGIMMSPLPGITPTKPGSCTRPLPGVVPSIVDELGNSVDSEHGGKLCISQPWPGMLRGIYGDEERFVEQYWSDVPDKYLTGDNARCDTDGYYWIMGRIDDVINVSGHRLSTIEVESALVSHPDVCEAAVVGRPHDLKGQAIAAFVTSNDRGHDDEFRNELKQHVRKQIGALAQPDDIRFTAALPKTRSGKIMRRLLRDVAAGRELVGDTSTLEDLSSLAKLREED</sequence>
<keyword id="KW-0007">Acetylation</keyword>
<keyword id="KW-0067">ATP-binding</keyword>
<keyword id="KW-0436">Ligase</keyword>
<keyword id="KW-0460">Magnesium</keyword>
<keyword id="KW-0479">Metal-binding</keyword>
<keyword id="KW-0547">Nucleotide-binding</keyword>
<keyword id="KW-1185">Reference proteome</keyword>
<name>ACSA_RHOBA</name>
<accession>P59872</accession>
<gene>
    <name evidence="1" type="primary">acsA</name>
    <name type="synonym">acs</name>
    <name type="ordered locus">RB13264</name>
</gene>
<evidence type="ECO:0000255" key="1">
    <source>
        <dbReference type="HAMAP-Rule" id="MF_01123"/>
    </source>
</evidence>
<evidence type="ECO:0000256" key="2">
    <source>
        <dbReference type="SAM" id="MobiDB-lite"/>
    </source>
</evidence>
<proteinExistence type="inferred from homology"/>
<protein>
    <recommendedName>
        <fullName evidence="1">Acetyl-coenzyme A synthetase</fullName>
        <shortName evidence="1">AcCoA synthetase</shortName>
        <shortName evidence="1">Acs</shortName>
        <ecNumber evidence="1">6.2.1.1</ecNumber>
    </recommendedName>
    <alternativeName>
        <fullName evidence="1">Acetate--CoA ligase</fullName>
    </alternativeName>
    <alternativeName>
        <fullName evidence="1">Acyl-activating enzyme</fullName>
    </alternativeName>
</protein>
<feature type="chain" id="PRO_0000208383" description="Acetyl-coenzyme A synthetase">
    <location>
        <begin position="1"/>
        <end position="671"/>
    </location>
</feature>
<feature type="region of interest" description="Disordered" evidence="2">
    <location>
        <begin position="1"/>
        <end position="21"/>
    </location>
</feature>
<feature type="binding site" evidence="1">
    <location>
        <begin position="221"/>
        <end position="224"/>
    </location>
    <ligand>
        <name>CoA</name>
        <dbReference type="ChEBI" id="CHEBI:57287"/>
    </ligand>
</feature>
<feature type="binding site" evidence="1">
    <location>
        <position position="339"/>
    </location>
    <ligand>
        <name>CoA</name>
        <dbReference type="ChEBI" id="CHEBI:57287"/>
    </ligand>
</feature>
<feature type="binding site" evidence="1">
    <location>
        <position position="363"/>
    </location>
    <ligand>
        <name>CoA</name>
        <dbReference type="ChEBI" id="CHEBI:57287"/>
    </ligand>
</feature>
<feature type="binding site" evidence="1">
    <location>
        <begin position="415"/>
        <end position="417"/>
    </location>
    <ligand>
        <name>ATP</name>
        <dbReference type="ChEBI" id="CHEBI:30616"/>
    </ligand>
</feature>
<feature type="binding site" evidence="1">
    <location>
        <begin position="439"/>
        <end position="444"/>
    </location>
    <ligand>
        <name>ATP</name>
        <dbReference type="ChEBI" id="CHEBI:30616"/>
    </ligand>
</feature>
<feature type="binding site" evidence="1">
    <location>
        <position position="528"/>
    </location>
    <ligand>
        <name>ATP</name>
        <dbReference type="ChEBI" id="CHEBI:30616"/>
    </ligand>
</feature>
<feature type="binding site" evidence="1">
    <location>
        <position position="543"/>
    </location>
    <ligand>
        <name>ATP</name>
        <dbReference type="ChEBI" id="CHEBI:30616"/>
    </ligand>
</feature>
<feature type="binding site" evidence="1">
    <location>
        <position position="551"/>
    </location>
    <ligand>
        <name>CoA</name>
        <dbReference type="ChEBI" id="CHEBI:57287"/>
    </ligand>
</feature>
<feature type="binding site" evidence="1">
    <location>
        <position position="554"/>
    </location>
    <ligand>
        <name>ATP</name>
        <dbReference type="ChEBI" id="CHEBI:30616"/>
    </ligand>
</feature>
<feature type="binding site" evidence="1">
    <location>
        <position position="565"/>
    </location>
    <ligand>
        <name>Mg(2+)</name>
        <dbReference type="ChEBI" id="CHEBI:18420"/>
    </ligand>
</feature>
<feature type="binding site" evidence="1">
    <location>
        <position position="567"/>
    </location>
    <ligand>
        <name>Mg(2+)</name>
        <dbReference type="ChEBI" id="CHEBI:18420"/>
    </ligand>
</feature>
<feature type="binding site" evidence="1">
    <location>
        <position position="570"/>
    </location>
    <ligand>
        <name>Mg(2+)</name>
        <dbReference type="ChEBI" id="CHEBI:18420"/>
    </ligand>
</feature>
<feature type="binding site" evidence="1">
    <location>
        <position position="611"/>
    </location>
    <ligand>
        <name>CoA</name>
        <dbReference type="ChEBI" id="CHEBI:57287"/>
    </ligand>
</feature>
<feature type="modified residue" description="N6-acetyllysine" evidence="1">
    <location>
        <position position="636"/>
    </location>
</feature>